<gene>
    <name evidence="1" type="primary">yraN</name>
    <name type="ordered locus">ECIAI39_3645</name>
</gene>
<feature type="chain" id="PRO_1000200143" description="UPF0102 protein YraN">
    <location>
        <begin position="1"/>
        <end position="131"/>
    </location>
</feature>
<feature type="region of interest" description="Disordered" evidence="2">
    <location>
        <begin position="1"/>
        <end position="21"/>
    </location>
</feature>
<feature type="compositionally biased region" description="Polar residues" evidence="2">
    <location>
        <begin position="1"/>
        <end position="19"/>
    </location>
</feature>
<accession>B7NKL7</accession>
<name>YRAN_ECO7I</name>
<proteinExistence type="inferred from homology"/>
<reference key="1">
    <citation type="journal article" date="2009" name="PLoS Genet.">
        <title>Organised genome dynamics in the Escherichia coli species results in highly diverse adaptive paths.</title>
        <authorList>
            <person name="Touchon M."/>
            <person name="Hoede C."/>
            <person name="Tenaillon O."/>
            <person name="Barbe V."/>
            <person name="Baeriswyl S."/>
            <person name="Bidet P."/>
            <person name="Bingen E."/>
            <person name="Bonacorsi S."/>
            <person name="Bouchier C."/>
            <person name="Bouvet O."/>
            <person name="Calteau A."/>
            <person name="Chiapello H."/>
            <person name="Clermont O."/>
            <person name="Cruveiller S."/>
            <person name="Danchin A."/>
            <person name="Diard M."/>
            <person name="Dossat C."/>
            <person name="Karoui M.E."/>
            <person name="Frapy E."/>
            <person name="Garry L."/>
            <person name="Ghigo J.M."/>
            <person name="Gilles A.M."/>
            <person name="Johnson J."/>
            <person name="Le Bouguenec C."/>
            <person name="Lescat M."/>
            <person name="Mangenot S."/>
            <person name="Martinez-Jehanne V."/>
            <person name="Matic I."/>
            <person name="Nassif X."/>
            <person name="Oztas S."/>
            <person name="Petit M.A."/>
            <person name="Pichon C."/>
            <person name="Rouy Z."/>
            <person name="Ruf C.S."/>
            <person name="Schneider D."/>
            <person name="Tourret J."/>
            <person name="Vacherie B."/>
            <person name="Vallenet D."/>
            <person name="Medigue C."/>
            <person name="Rocha E.P.C."/>
            <person name="Denamur E."/>
        </authorList>
    </citation>
    <scope>NUCLEOTIDE SEQUENCE [LARGE SCALE GENOMIC DNA]</scope>
    <source>
        <strain>IAI39 / ExPEC</strain>
    </source>
</reference>
<organism>
    <name type="scientific">Escherichia coli O7:K1 (strain IAI39 / ExPEC)</name>
    <dbReference type="NCBI Taxonomy" id="585057"/>
    <lineage>
        <taxon>Bacteria</taxon>
        <taxon>Pseudomonadati</taxon>
        <taxon>Pseudomonadota</taxon>
        <taxon>Gammaproteobacteria</taxon>
        <taxon>Enterobacterales</taxon>
        <taxon>Enterobacteriaceae</taxon>
        <taxon>Escherichia</taxon>
    </lineage>
</organism>
<comment type="similarity">
    <text evidence="1">Belongs to the UPF0102 family.</text>
</comment>
<protein>
    <recommendedName>
        <fullName evidence="1">UPF0102 protein YraN</fullName>
    </recommendedName>
</protein>
<sequence>MATVPTRSGSPRQLTTKQTGDAWEAQARRWLEGKGLRFIAANVNERGGEIDLIMREGRTTVFVEVRYRRSALYGGAAASVTRSKQHKLLQTARLWLARHNGSFDTVDCRFDVVAFTGNEVEWIKDAFNDHS</sequence>
<evidence type="ECO:0000255" key="1">
    <source>
        <dbReference type="HAMAP-Rule" id="MF_00048"/>
    </source>
</evidence>
<evidence type="ECO:0000256" key="2">
    <source>
        <dbReference type="SAM" id="MobiDB-lite"/>
    </source>
</evidence>
<dbReference type="EMBL" id="CU928164">
    <property type="protein sequence ID" value="CAR19761.1"/>
    <property type="molecule type" value="Genomic_DNA"/>
</dbReference>
<dbReference type="RefSeq" id="WP_000246837.1">
    <property type="nucleotide sequence ID" value="NC_011750.1"/>
</dbReference>
<dbReference type="RefSeq" id="YP_002409548.1">
    <property type="nucleotide sequence ID" value="NC_011750.1"/>
</dbReference>
<dbReference type="SMR" id="B7NKL7"/>
<dbReference type="STRING" id="585057.ECIAI39_3645"/>
<dbReference type="KEGG" id="ect:ECIAI39_3645"/>
<dbReference type="PATRIC" id="fig|585057.6.peg.3778"/>
<dbReference type="HOGENOM" id="CLU_115353_1_0_6"/>
<dbReference type="Proteomes" id="UP000000749">
    <property type="component" value="Chromosome"/>
</dbReference>
<dbReference type="GO" id="GO:0003676">
    <property type="term" value="F:nucleic acid binding"/>
    <property type="evidence" value="ECO:0007669"/>
    <property type="project" value="InterPro"/>
</dbReference>
<dbReference type="CDD" id="cd20736">
    <property type="entry name" value="PoNe_Nuclease"/>
    <property type="match status" value="1"/>
</dbReference>
<dbReference type="Gene3D" id="3.40.1350.10">
    <property type="match status" value="1"/>
</dbReference>
<dbReference type="HAMAP" id="MF_00048">
    <property type="entry name" value="UPF0102"/>
    <property type="match status" value="1"/>
</dbReference>
<dbReference type="InterPro" id="IPR011335">
    <property type="entry name" value="Restrct_endonuc-II-like"/>
</dbReference>
<dbReference type="InterPro" id="IPR011856">
    <property type="entry name" value="tRNA_endonuc-like_dom_sf"/>
</dbReference>
<dbReference type="InterPro" id="IPR003509">
    <property type="entry name" value="UPF0102_YraN-like"/>
</dbReference>
<dbReference type="NCBIfam" id="NF009150">
    <property type="entry name" value="PRK12497.1-3"/>
    <property type="match status" value="1"/>
</dbReference>
<dbReference type="NCBIfam" id="TIGR00252">
    <property type="entry name" value="YraN family protein"/>
    <property type="match status" value="1"/>
</dbReference>
<dbReference type="PANTHER" id="PTHR34039">
    <property type="entry name" value="UPF0102 PROTEIN YRAN"/>
    <property type="match status" value="1"/>
</dbReference>
<dbReference type="PANTHER" id="PTHR34039:SF1">
    <property type="entry name" value="UPF0102 PROTEIN YRAN"/>
    <property type="match status" value="1"/>
</dbReference>
<dbReference type="Pfam" id="PF02021">
    <property type="entry name" value="UPF0102"/>
    <property type="match status" value="1"/>
</dbReference>
<dbReference type="SUPFAM" id="SSF52980">
    <property type="entry name" value="Restriction endonuclease-like"/>
    <property type="match status" value="1"/>
</dbReference>